<sequence length="137" mass="15695">MVEDSFLTDTQIKVLKLRKKGLTQEEIAKMLGTSRANISMIEKRAKENIKKAYNTIKIYNRIMAPLSIEIEEGTDVLEIPDIVFKKADEEGIKVKYNTLELIELIKENASEFIEKRTVKKKFKIYILENGDLDVGGS</sequence>
<dbReference type="EMBL" id="L77117">
    <property type="protein sequence ID" value="AAB98158.1"/>
    <property type="status" value="ALT_INIT"/>
    <property type="molecule type" value="Genomic_DNA"/>
</dbReference>
<dbReference type="PIR" id="F64321">
    <property type="entry name" value="F64321"/>
</dbReference>
<dbReference type="RefSeq" id="WP_064496415.1">
    <property type="nucleotide sequence ID" value="NC_000909.1"/>
</dbReference>
<dbReference type="SMR" id="Q57637"/>
<dbReference type="STRING" id="243232.MJ_0173"/>
<dbReference type="PaxDb" id="243232-MJ_0173"/>
<dbReference type="EnsemblBacteria" id="AAB98158">
    <property type="protein sequence ID" value="AAB98158"/>
    <property type="gene ID" value="MJ_0173"/>
</dbReference>
<dbReference type="GeneID" id="1451020"/>
<dbReference type="KEGG" id="mja:MJ_0173"/>
<dbReference type="eggNOG" id="arCOG04554">
    <property type="taxonomic scope" value="Archaea"/>
</dbReference>
<dbReference type="HOGENOM" id="CLU_125807_0_1_2"/>
<dbReference type="InParanoid" id="Q57637"/>
<dbReference type="OrthoDB" id="17771at2157"/>
<dbReference type="PhylomeDB" id="Q57637"/>
<dbReference type="Proteomes" id="UP000000805">
    <property type="component" value="Chromosome"/>
</dbReference>
<dbReference type="GO" id="GO:0003677">
    <property type="term" value="F:DNA binding"/>
    <property type="evidence" value="ECO:0007669"/>
    <property type="project" value="UniProtKB-KW"/>
</dbReference>
<dbReference type="GO" id="GO:0003700">
    <property type="term" value="F:DNA-binding transcription factor activity"/>
    <property type="evidence" value="ECO:0007669"/>
    <property type="project" value="UniProtKB-UniRule"/>
</dbReference>
<dbReference type="GO" id="GO:0006352">
    <property type="term" value="P:DNA-templated transcription initiation"/>
    <property type="evidence" value="ECO:0007669"/>
    <property type="project" value="InterPro"/>
</dbReference>
<dbReference type="Gene3D" id="3.30.1190.10">
    <property type="entry name" value="DNA-binding protein Tfx superfamily, archaea"/>
    <property type="match status" value="1"/>
</dbReference>
<dbReference type="HAMAP" id="MF_00620">
    <property type="entry name" value="HTH_type_Tfx"/>
    <property type="match status" value="1"/>
</dbReference>
<dbReference type="InterPro" id="IPR001387">
    <property type="entry name" value="Cro/C1-type_HTH"/>
</dbReference>
<dbReference type="InterPro" id="IPR007630">
    <property type="entry name" value="RNA_pol_sigma70_r4"/>
</dbReference>
<dbReference type="InterPro" id="IPR029291">
    <property type="entry name" value="Tfx_C"/>
</dbReference>
<dbReference type="InterPro" id="IPR004645">
    <property type="entry name" value="Tfx_DNA-bd_arc"/>
</dbReference>
<dbReference type="InterPro" id="IPR018384">
    <property type="entry name" value="Tfx_DNA-bd_euryarc"/>
</dbReference>
<dbReference type="InterPro" id="IPR036657">
    <property type="entry name" value="Tfx_DNA-bd_sf_arc"/>
</dbReference>
<dbReference type="NCBIfam" id="NF003055">
    <property type="entry name" value="PRK03975.1-2"/>
    <property type="match status" value="1"/>
</dbReference>
<dbReference type="NCBIfam" id="NF003056">
    <property type="entry name" value="PRK03975.1-4"/>
    <property type="match status" value="1"/>
</dbReference>
<dbReference type="NCBIfam" id="TIGR00721">
    <property type="entry name" value="tfx"/>
    <property type="match status" value="1"/>
</dbReference>
<dbReference type="Pfam" id="PF04545">
    <property type="entry name" value="Sigma70_r4"/>
    <property type="match status" value="1"/>
</dbReference>
<dbReference type="Pfam" id="PF14601">
    <property type="entry name" value="TFX_C"/>
    <property type="match status" value="1"/>
</dbReference>
<dbReference type="PIRSF" id="PIRSF004932">
    <property type="entry name" value="DNA_bind_Tfx"/>
    <property type="match status" value="1"/>
</dbReference>
<dbReference type="SUPFAM" id="SSF89915">
    <property type="entry name" value="DNA-binding protein Tfx"/>
    <property type="match status" value="1"/>
</dbReference>
<feature type="chain" id="PRO_0000144170" description="Putative transcriptional regulatory protein MJ0173">
    <location>
        <begin position="1"/>
        <end position="137"/>
    </location>
</feature>
<organism>
    <name type="scientific">Methanocaldococcus jannaschii (strain ATCC 43067 / DSM 2661 / JAL-1 / JCM 10045 / NBRC 100440)</name>
    <name type="common">Methanococcus jannaschii</name>
    <dbReference type="NCBI Taxonomy" id="243232"/>
    <lineage>
        <taxon>Archaea</taxon>
        <taxon>Methanobacteriati</taxon>
        <taxon>Methanobacteriota</taxon>
        <taxon>Methanomada group</taxon>
        <taxon>Methanococci</taxon>
        <taxon>Methanococcales</taxon>
        <taxon>Methanocaldococcaceae</taxon>
        <taxon>Methanocaldococcus</taxon>
    </lineage>
</organism>
<protein>
    <recommendedName>
        <fullName evidence="1">Putative transcriptional regulatory protein MJ0173</fullName>
    </recommendedName>
</protein>
<keyword id="KW-0238">DNA-binding</keyword>
<keyword id="KW-1185">Reference proteome</keyword>
<keyword id="KW-0804">Transcription</keyword>
<keyword id="KW-0805">Transcription regulation</keyword>
<comment type="function">
    <text evidence="1">Putative transcriptional regulator.</text>
</comment>
<comment type="similarity">
    <text evidence="1">Belongs to the Tfx family.</text>
</comment>
<comment type="sequence caution" evidence="2">
    <conflict type="erroneous initiation">
        <sequence resource="EMBL-CDS" id="AAB98158"/>
    </conflict>
</comment>
<gene>
    <name type="ordered locus">MJ0173</name>
</gene>
<accession>Q57637</accession>
<name>Y173_METJA</name>
<evidence type="ECO:0000255" key="1">
    <source>
        <dbReference type="HAMAP-Rule" id="MF_00620"/>
    </source>
</evidence>
<evidence type="ECO:0000305" key="2"/>
<reference key="1">
    <citation type="journal article" date="1996" name="Science">
        <title>Complete genome sequence of the methanogenic archaeon, Methanococcus jannaschii.</title>
        <authorList>
            <person name="Bult C.J."/>
            <person name="White O."/>
            <person name="Olsen G.J."/>
            <person name="Zhou L."/>
            <person name="Fleischmann R.D."/>
            <person name="Sutton G.G."/>
            <person name="Blake J.A."/>
            <person name="FitzGerald L.M."/>
            <person name="Clayton R.A."/>
            <person name="Gocayne J.D."/>
            <person name="Kerlavage A.R."/>
            <person name="Dougherty B.A."/>
            <person name="Tomb J.-F."/>
            <person name="Adams M.D."/>
            <person name="Reich C.I."/>
            <person name="Overbeek R."/>
            <person name="Kirkness E.F."/>
            <person name="Weinstock K.G."/>
            <person name="Merrick J.M."/>
            <person name="Glodek A."/>
            <person name="Scott J.L."/>
            <person name="Geoghagen N.S.M."/>
            <person name="Weidman J.F."/>
            <person name="Fuhrmann J.L."/>
            <person name="Nguyen D."/>
            <person name="Utterback T.R."/>
            <person name="Kelley J.M."/>
            <person name="Peterson J.D."/>
            <person name="Sadow P.W."/>
            <person name="Hanna M.C."/>
            <person name="Cotton M.D."/>
            <person name="Roberts K.M."/>
            <person name="Hurst M.A."/>
            <person name="Kaine B.P."/>
            <person name="Borodovsky M."/>
            <person name="Klenk H.-P."/>
            <person name="Fraser C.M."/>
            <person name="Smith H.O."/>
            <person name="Woese C.R."/>
            <person name="Venter J.C."/>
        </authorList>
    </citation>
    <scope>NUCLEOTIDE SEQUENCE [LARGE SCALE GENOMIC DNA]</scope>
    <source>
        <strain>ATCC 43067 / DSM 2661 / JAL-1 / JCM 10045 / NBRC 100440</strain>
    </source>
</reference>
<proteinExistence type="inferred from homology"/>